<feature type="signal peptide" evidence="4">
    <location>
        <begin position="1"/>
        <end position="26"/>
    </location>
</feature>
<feature type="chain" id="PRO_0000423489" description="L-cysteine S-thiosulfotransferase subunit SoxA">
    <location>
        <begin position="27"/>
        <end position="287"/>
    </location>
</feature>
<feature type="domain" description="Cytochrome c" evidence="2">
    <location>
        <begin position="74"/>
        <end position="168"/>
    </location>
</feature>
<feature type="active site" description="Cysteine persulfide intermediate" evidence="5 6">
    <location>
        <position position="248"/>
    </location>
</feature>
<feature type="binding site" description="covalent" evidence="2 5 6">
    <location>
        <position position="102"/>
    </location>
    <ligand>
        <name>heme c</name>
        <dbReference type="ChEBI" id="CHEBI:61717"/>
        <label>1</label>
    </ligand>
</feature>
<feature type="binding site" description="covalent" evidence="2 5 6">
    <location>
        <position position="105"/>
    </location>
    <ligand>
        <name>heme c</name>
        <dbReference type="ChEBI" id="CHEBI:61717"/>
        <label>1</label>
    </ligand>
</feature>
<feature type="binding site" description="axial binding residue" evidence="2 5 6">
    <location>
        <position position="106"/>
    </location>
    <ligand>
        <name>heme c</name>
        <dbReference type="ChEBI" id="CHEBI:61717"/>
        <label>1</label>
    </ligand>
    <ligandPart>
        <name>Fe</name>
        <dbReference type="ChEBI" id="CHEBI:18248"/>
    </ligandPart>
</feature>
<feature type="binding site" description="axial binding residue" evidence="2 5 6">
    <location>
        <position position="140"/>
    </location>
    <ligand>
        <name>heme c</name>
        <dbReference type="ChEBI" id="CHEBI:61717"/>
        <label>1</label>
    </ligand>
    <ligandPart>
        <name>Fe</name>
        <dbReference type="ChEBI" id="CHEBI:18248"/>
    </ligandPart>
</feature>
<feature type="binding site" description="covalent" evidence="2 5 6">
    <location>
        <position position="203"/>
    </location>
    <ligand>
        <name>heme c</name>
        <dbReference type="ChEBI" id="CHEBI:61717"/>
        <label>2</label>
    </ligand>
</feature>
<feature type="binding site" description="covalent" evidence="2 5 6">
    <location>
        <position position="206"/>
    </location>
    <ligand>
        <name>heme c</name>
        <dbReference type="ChEBI" id="CHEBI:61717"/>
        <label>2</label>
    </ligand>
</feature>
<feature type="binding site" description="axial binding residue" evidence="2 5 6">
    <location>
        <position position="207"/>
    </location>
    <ligand>
        <name>heme c</name>
        <dbReference type="ChEBI" id="CHEBI:61717"/>
        <label>2</label>
    </ligand>
    <ligandPart>
        <name>Fe</name>
        <dbReference type="ChEBI" id="CHEBI:18248"/>
    </ligandPart>
</feature>
<feature type="binding site" evidence="5">
    <location>
        <position position="244"/>
    </location>
    <ligand>
        <name>substrate</name>
    </ligand>
</feature>
<feature type="binding site" description="axial binding residue" evidence="2 5 6">
    <location>
        <position position="248"/>
    </location>
    <ligand>
        <name>heme c</name>
        <dbReference type="ChEBI" id="CHEBI:61717"/>
        <label>2</label>
    </ligand>
    <ligandPart>
        <name>Fe</name>
        <dbReference type="ChEBI" id="CHEBI:18248"/>
    </ligandPart>
</feature>
<feature type="strand" evidence="14">
    <location>
        <begin position="32"/>
        <end position="34"/>
    </location>
</feature>
<feature type="turn" evidence="14">
    <location>
        <begin position="35"/>
        <end position="37"/>
    </location>
</feature>
<feature type="strand" evidence="14">
    <location>
        <begin position="38"/>
        <end position="40"/>
    </location>
</feature>
<feature type="strand" evidence="15">
    <location>
        <begin position="43"/>
        <end position="45"/>
    </location>
</feature>
<feature type="helix" evidence="14">
    <location>
        <begin position="48"/>
        <end position="50"/>
    </location>
</feature>
<feature type="turn" evidence="14">
    <location>
        <begin position="51"/>
        <end position="53"/>
    </location>
</feature>
<feature type="strand" evidence="14">
    <location>
        <begin position="55"/>
        <end position="58"/>
    </location>
</feature>
<feature type="helix" evidence="14">
    <location>
        <begin position="60"/>
        <end position="63"/>
    </location>
</feature>
<feature type="helix" evidence="14">
    <location>
        <begin position="66"/>
        <end position="71"/>
    </location>
</feature>
<feature type="helix" evidence="14">
    <location>
        <begin position="75"/>
        <end position="77"/>
    </location>
</feature>
<feature type="helix" evidence="14">
    <location>
        <begin position="80"/>
        <end position="91"/>
    </location>
</feature>
<feature type="helix" evidence="14">
    <location>
        <begin position="102"/>
        <end position="106"/>
    </location>
</feature>
<feature type="helix" evidence="14">
    <location>
        <begin position="109"/>
        <end position="112"/>
    </location>
</feature>
<feature type="turn" evidence="14">
    <location>
        <begin position="113"/>
        <end position="115"/>
    </location>
</feature>
<feature type="helix" evidence="14">
    <location>
        <begin position="116"/>
        <end position="119"/>
    </location>
</feature>
<feature type="strand" evidence="14">
    <location>
        <begin position="121"/>
        <end position="123"/>
    </location>
</feature>
<feature type="turn" evidence="14">
    <location>
        <begin position="125"/>
        <end position="127"/>
    </location>
</feature>
<feature type="strand" evidence="14">
    <location>
        <begin position="128"/>
        <end position="131"/>
    </location>
</feature>
<feature type="helix" evidence="14">
    <location>
        <begin position="133"/>
        <end position="143"/>
    </location>
</feature>
<feature type="helix" evidence="14">
    <location>
        <begin position="155"/>
        <end position="166"/>
    </location>
</feature>
<feature type="turn" evidence="14">
    <location>
        <begin position="167"/>
        <end position="170"/>
    </location>
</feature>
<feature type="helix" evidence="14">
    <location>
        <begin position="179"/>
        <end position="181"/>
    </location>
</feature>
<feature type="helix" evidence="14">
    <location>
        <begin position="182"/>
        <end position="192"/>
    </location>
</feature>
<feature type="turn" evidence="14">
    <location>
        <begin position="197"/>
        <end position="200"/>
    </location>
</feature>
<feature type="helix" evidence="14">
    <location>
        <begin position="203"/>
        <end position="207"/>
    </location>
</feature>
<feature type="strand" evidence="14">
    <location>
        <begin position="213"/>
        <end position="215"/>
    </location>
</feature>
<feature type="strand" evidence="14">
    <location>
        <begin position="229"/>
        <end position="232"/>
    </location>
</feature>
<feature type="turn" evidence="14">
    <location>
        <begin position="233"/>
        <end position="236"/>
    </location>
</feature>
<feature type="strand" evidence="14">
    <location>
        <begin position="237"/>
        <end position="239"/>
    </location>
</feature>
<feature type="helix" evidence="14">
    <location>
        <begin position="241"/>
        <end position="250"/>
    </location>
</feature>
<feature type="turn" evidence="14">
    <location>
        <begin position="251"/>
        <end position="253"/>
    </location>
</feature>
<feature type="helix" evidence="14">
    <location>
        <begin position="262"/>
        <end position="274"/>
    </location>
</feature>
<feature type="turn" evidence="14">
    <location>
        <begin position="275"/>
        <end position="277"/>
    </location>
</feature>
<feature type="strand" evidence="15">
    <location>
        <begin position="278"/>
        <end position="280"/>
    </location>
</feature>
<feature type="strand" evidence="14">
    <location>
        <begin position="283"/>
        <end position="286"/>
    </location>
</feature>
<name>SOXA_RHOSU</name>
<comment type="function">
    <text evidence="3 4 5 6">C-type diheme cytochrome, which is part of the SoxAX cytochrome complex involved in sulfur oxidation. The SoxAX complex catalyzes the formation of a heterodisulfide bond between the conserved cysteine residue on a sulfur carrier SoxYZ complex subunit SoxY and thiosulfate or other inorganic sulfur substrates. This leads to the liberation of two electrons, which may be transferred from the SoxAX complex to another cytochrome c and which then may be used for reductive CO(2) fixation.</text>
</comment>
<comment type="catalytic activity">
    <reaction evidence="4">
        <text>L-cysteinyl-[SoxY protein] + thiosulfate + 2 Fe(III)-[cytochrome c] = S-sulfosulfanyl-L-cysteinyl-[SoxY protein] + 2 Fe(II)-[cytochrome c] + 2 H(+)</text>
        <dbReference type="Rhea" id="RHEA:56720"/>
        <dbReference type="Rhea" id="RHEA-COMP:10350"/>
        <dbReference type="Rhea" id="RHEA-COMP:14328"/>
        <dbReference type="Rhea" id="RHEA-COMP:14399"/>
        <dbReference type="Rhea" id="RHEA-COMP:14691"/>
        <dbReference type="ChEBI" id="CHEBI:15378"/>
        <dbReference type="ChEBI" id="CHEBI:29033"/>
        <dbReference type="ChEBI" id="CHEBI:29034"/>
        <dbReference type="ChEBI" id="CHEBI:29950"/>
        <dbReference type="ChEBI" id="CHEBI:33542"/>
        <dbReference type="ChEBI" id="CHEBI:139321"/>
        <dbReference type="EC" id="2.8.5.2"/>
    </reaction>
</comment>
<comment type="catalytic activity">
    <reaction evidence="4">
        <text>S-sulfanyl-L-cysteinyl-[SoxY protein] + thiosulfate + 2 Fe(III)-[cytochrome c] = S-(2-sulfodisulfanyl)-L-cysteinyl-[SoxY protein] + 2 Fe(II)-[cytochrome c] + 2 H(+)</text>
        <dbReference type="Rhea" id="RHEA:51224"/>
        <dbReference type="Rhea" id="RHEA-COMP:10350"/>
        <dbReference type="Rhea" id="RHEA-COMP:14399"/>
        <dbReference type="Rhea" id="RHEA-COMP:14689"/>
        <dbReference type="Rhea" id="RHEA-COMP:14690"/>
        <dbReference type="ChEBI" id="CHEBI:15378"/>
        <dbReference type="ChEBI" id="CHEBI:29033"/>
        <dbReference type="ChEBI" id="CHEBI:29034"/>
        <dbReference type="ChEBI" id="CHEBI:33542"/>
        <dbReference type="ChEBI" id="CHEBI:61963"/>
        <dbReference type="ChEBI" id="CHEBI:140664"/>
        <dbReference type="EC" id="2.8.5.2"/>
    </reaction>
</comment>
<comment type="cofactor">
    <cofactor evidence="3 4 5 6">
        <name>heme c</name>
        <dbReference type="ChEBI" id="CHEBI:61717"/>
    </cofactor>
    <text evidence="3 4 5 6">Binds 2 heme c groups covalently per subunit.</text>
</comment>
<comment type="biophysicochemical properties">
    <redoxPotential>
        <text evidence="6">E(0) is approximately -340 mV for His/Cys(-) ligated heme (heme 1) and -400 mV for His/CysS(-) ligated heme (heme 2) at pH 7.0.</text>
    </redoxPotential>
</comment>
<comment type="subunit">
    <text evidence="4 5 6">Heterodimer of SoxA and SoxX.</text>
</comment>
<comment type="subcellular location">
    <subcellularLocation>
        <location evidence="4">Periplasm</location>
    </subcellularLocation>
</comment>
<comment type="induction">
    <text evidence="4">By thiosulfate.</text>
</comment>
<comment type="PTM">
    <text evidence="5 6">Cysteine persulfide at Cys-248.</text>
</comment>
<comment type="mass spectrometry" mass="30177.0" error="4.0" method="Electrospray" evidence="4">
    <text>The measured mass is that of mature SoxA with a diheme bound and with an undetermined modification.</text>
</comment>
<comment type="disruption phenotype">
    <text evidence="4">Unable to grow photoautotrophically on or oxidize either thiosulfate or sulfide. Thiosulfate:cytochrome c oxidoreductase activity is zero in periplasmic extracts prepared from cells grown on thiosulfate plus malate.</text>
</comment>
<comment type="similarity">
    <text evidence="1 11">Belongs to the SoxA family.</text>
</comment>
<evidence type="ECO:0000255" key="1"/>
<evidence type="ECO:0000255" key="2">
    <source>
        <dbReference type="PROSITE-ProRule" id="PRU00433"/>
    </source>
</evidence>
<evidence type="ECO:0000269" key="3">
    <source>
    </source>
</evidence>
<evidence type="ECO:0000269" key="4">
    <source>
    </source>
</evidence>
<evidence type="ECO:0000269" key="5">
    <source>
    </source>
</evidence>
<evidence type="ECO:0000269" key="6">
    <source>
    </source>
</evidence>
<evidence type="ECO:0000303" key="7">
    <source>
    </source>
</evidence>
<evidence type="ECO:0000303" key="8">
    <source>
    </source>
</evidence>
<evidence type="ECO:0000303" key="9">
    <source>
    </source>
</evidence>
<evidence type="ECO:0000303" key="10">
    <source>
    </source>
</evidence>
<evidence type="ECO:0000305" key="11"/>
<evidence type="ECO:0000312" key="12">
    <source>
        <dbReference type="EMBL" id="AAF99434.1"/>
    </source>
</evidence>
<evidence type="ECO:0000312" key="13">
    <source>
        <dbReference type="PDB" id="1H32"/>
    </source>
</evidence>
<evidence type="ECO:0007829" key="14">
    <source>
        <dbReference type="PDB" id="1H32"/>
    </source>
</evidence>
<evidence type="ECO:0007829" key="15">
    <source>
        <dbReference type="PDB" id="2OZ1"/>
    </source>
</evidence>
<reference evidence="11 12" key="1">
    <citation type="journal article" date="2001" name="J. Bacteriol.">
        <title>Cytochrome complex essential for photosynthetic oxidation of both thiosulfate and sulfide in Rhodovulum sulfidophilum.</title>
        <authorList>
            <person name="Appia-Ayme C."/>
            <person name="Little P.J."/>
            <person name="Matsumoto Y."/>
            <person name="Leech A.P."/>
            <person name="Berks B.C."/>
        </authorList>
    </citation>
    <scope>NUCLEOTIDE SEQUENCE [GENOMIC DNA]</scope>
    <scope>PROTEIN SEQUENCE OF 27-57; 66-73; 132-139; 255-266 AND 274-287</scope>
    <scope>FUNCTION</scope>
    <scope>CATALYTIC ACTIVITY</scope>
    <scope>COFACTOR</scope>
    <scope>SUBUNIT</scope>
    <scope>SUBCELLULAR LOCATION</scope>
    <scope>INDUCTION BY THIOSULFATE</scope>
    <scope>MASS SPECTROMETRY</scope>
    <scope>DISRUPTION PHENOTYPE</scope>
    <scope>SIGNAL</scope>
    <source>
        <strain evidence="4">W4</strain>
    </source>
</reference>
<reference evidence="11" key="2">
    <citation type="journal article" date="2001" name="Biochemistry">
        <title>Novel heme ligation in a c-type cytochrome involved in thiosulfate oxidation: EPR and MCD of SoxAX from Rhodovulum sulfidophilum.</title>
        <authorList>
            <person name="Cheesman M.R."/>
            <person name="Little P.J."/>
            <person name="Berks B.C."/>
        </authorList>
    </citation>
    <scope>FUNCTION</scope>
    <scope>COFACTOR</scope>
    <scope>EPR SPECTROSCOPY OF THE HEMES</scope>
    <scope>MAGNETIC CIRCULAR DICHROISM OF THE SOXAX COMPLEX</scope>
    <source>
        <strain evidence="3">W4</strain>
    </source>
</reference>
<reference evidence="13" key="3">
    <citation type="journal article" date="2002" name="EMBO J.">
        <title>Structural basis for the oxidation of thiosulfate by a sulfur cycle enzyme.</title>
        <authorList>
            <person name="Bamford V.A."/>
            <person name="Bruno S."/>
            <person name="Rasmussen T."/>
            <person name="Appia-Ayme C."/>
            <person name="Cheesman M.R."/>
            <person name="Berks B.C."/>
            <person name="Hemmings A.M."/>
        </authorList>
    </citation>
    <scope>X-RAY CRYSTALLOGRAPHY (1.50 ANGSTROMS) OF 27-287 IN COMPLEXES WITH SOXX IN OXIDIZED AND REDUCED STATES AND HEMES</scope>
    <scope>FUNCTION</scope>
    <scope>COFACTOR</scope>
    <scope>SUBUNIT</scope>
    <scope>EPR SPECTROSCOPY OF THE HEMES</scope>
    <scope>REACTION MECHANISM</scope>
    <scope>ACTIVE SITE</scope>
    <scope>CYSTEINE PERSULFIDE AT CYS-248</scope>
    <source>
        <strain evidence="5">W4</strain>
    </source>
</reference>
<reference evidence="11" key="4">
    <citation type="journal article" date="2012" name="J. Biol. Chem.">
        <title>Redox and chemical activities of the hemes in the sulfur oxidation pathway enzyme SoxAX.</title>
        <authorList>
            <person name="Bradley J.M."/>
            <person name="Marritt S.J."/>
            <person name="Kihlken M.A."/>
            <person name="Haynes K."/>
            <person name="Hemmings A.M."/>
            <person name="Berks B.C."/>
            <person name="Cheesman M.R."/>
            <person name="Butt J.N."/>
        </authorList>
    </citation>
    <scope>X-RAY CRYSTALLOGRAPHY (2.35 ANGSTROMS) OF 27-287 IN COMPLEX WITH SOXX AND HEME</scope>
    <scope>FUNCTION</scope>
    <scope>COFACTOR</scope>
    <scope>BIOPHYSICOCHEMICAL PROPERTIES</scope>
    <scope>SUBUNIT</scope>
    <scope>POTENTIOMETRIC TITRATION; EPR SPECTROSCOPY AND MAGNETIC CIRCULAR DICHROISM OF THE SOXAX COMPLEX</scope>
    <scope>REACTION MECHANISM</scope>
    <scope>ACTIVE SITE</scope>
    <scope>CYSTEINE PERSULFIDE AT CYS-248</scope>
    <source>
        <strain evidence="6">W4</strain>
    </source>
</reference>
<keyword id="KW-0002">3D-structure</keyword>
<keyword id="KW-0903">Direct protein sequencing</keyword>
<keyword id="KW-0249">Electron transport</keyword>
<keyword id="KW-0349">Heme</keyword>
<keyword id="KW-0408">Iron</keyword>
<keyword id="KW-0479">Metal-binding</keyword>
<keyword id="KW-0574">Periplasm</keyword>
<keyword id="KW-0732">Signal</keyword>
<keyword id="KW-0808">Transferase</keyword>
<keyword id="KW-0813">Transport</keyword>
<gene>
    <name evidence="12" type="primary">soxA</name>
</gene>
<protein>
    <recommendedName>
        <fullName evidence="11">L-cysteine S-thiosulfotransferase subunit SoxA</fullName>
        <ecNumber evidence="4">2.8.5.2</ecNumber>
    </recommendedName>
    <alternativeName>
        <fullName evidence="8 12">Cytochrome c551 subunit diheme</fullName>
    </alternativeName>
    <alternativeName>
        <fullName evidence="8">Protein SoxA</fullName>
    </alternativeName>
    <alternativeName>
        <fullName evidence="8 10">SoxAX cytochrome complex subunit A</fullName>
    </alternativeName>
    <alternativeName>
        <fullName evidence="10">Sulfur oxidizing protein A</fullName>
    </alternativeName>
    <alternativeName>
        <fullName evidence="7 9">Thiosulfate-oxidizing multienzyme system protein SoxA</fullName>
        <shortName evidence="7 9">TOMES protein SoxA</shortName>
    </alternativeName>
</protein>
<organism>
    <name type="scientific">Rhodovulum sulfidophilum</name>
    <name type="common">Rhodobacter sulfidophilus</name>
    <dbReference type="NCBI Taxonomy" id="35806"/>
    <lineage>
        <taxon>Bacteria</taxon>
        <taxon>Pseudomonadati</taxon>
        <taxon>Pseudomonadota</taxon>
        <taxon>Alphaproteobacteria</taxon>
        <taxon>Rhodobacterales</taxon>
        <taxon>Paracoccaceae</taxon>
        <taxon>Rhodovulum</taxon>
    </lineage>
</organism>
<accession>Q939U1</accession>
<proteinExistence type="evidence at protein level"/>
<sequence length="287" mass="31332">MKTMTGRLVAAALVCGGAFSGAAVSAGPDDPLVINGEIEIVTRAPTPAHLADRFDEIRSGWTFRTDDTQALEMDDFENSGMVFVEEARAVWDRPEGTEGKACADCHGAVDDGMYGLRAVYPKYVESAGKVRTVEQMINACRTSRMGAPEWDYIGPDMTAMVALIASVSRGMPVSVAIDGPAQSTWEKGREIYYTRYGQLDLSCASCHEQYFDHYIRADHLSQGQINGFPSYRLKNARLNAVHDRFRGCIRDTRGVPFAVGSPEFVALELYVASRGNGLSVEGPSVRN</sequence>
<dbReference type="EC" id="2.8.5.2" evidence="4"/>
<dbReference type="EMBL" id="AY005800">
    <property type="protein sequence ID" value="AAF99434.1"/>
    <property type="molecule type" value="Genomic_DNA"/>
</dbReference>
<dbReference type="RefSeq" id="WP_042460802.1">
    <property type="nucleotide sequence ID" value="NZ_JAOQNT010000001.1"/>
</dbReference>
<dbReference type="PDB" id="1H31">
    <property type="method" value="X-ray"/>
    <property type="resolution" value="2.55 A"/>
    <property type="chains" value="A/C/E/G=27-287"/>
</dbReference>
<dbReference type="PDB" id="1H32">
    <property type="method" value="X-ray"/>
    <property type="resolution" value="1.50 A"/>
    <property type="chains" value="A=27-287"/>
</dbReference>
<dbReference type="PDB" id="1H33">
    <property type="method" value="X-ray"/>
    <property type="resolution" value="1.75 A"/>
    <property type="chains" value="A=27-287"/>
</dbReference>
<dbReference type="PDB" id="2OZ1">
    <property type="method" value="X-ray"/>
    <property type="resolution" value="2.35 A"/>
    <property type="chains" value="A/C/E/G=27-287"/>
</dbReference>
<dbReference type="PDBsum" id="1H31"/>
<dbReference type="PDBsum" id="1H32"/>
<dbReference type="PDBsum" id="1H33"/>
<dbReference type="PDBsum" id="2OZ1"/>
<dbReference type="SMR" id="Q939U1"/>
<dbReference type="STRING" id="35806.A6024_09415"/>
<dbReference type="GeneID" id="93539425"/>
<dbReference type="eggNOG" id="COG3258">
    <property type="taxonomic scope" value="Bacteria"/>
</dbReference>
<dbReference type="BRENDA" id="2.8.5.2">
    <property type="organism ID" value="5384"/>
</dbReference>
<dbReference type="EvolutionaryTrace" id="Q939U1"/>
<dbReference type="GO" id="GO:0070069">
    <property type="term" value="C:cytochrome complex"/>
    <property type="evidence" value="ECO:0000317"/>
    <property type="project" value="UniProtKB"/>
</dbReference>
<dbReference type="GO" id="GO:0042597">
    <property type="term" value="C:periplasmic space"/>
    <property type="evidence" value="ECO:0000314"/>
    <property type="project" value="UniProtKB"/>
</dbReference>
<dbReference type="GO" id="GO:0009055">
    <property type="term" value="F:electron transfer activity"/>
    <property type="evidence" value="ECO:0000314"/>
    <property type="project" value="UniProtKB"/>
</dbReference>
<dbReference type="GO" id="GO:0020037">
    <property type="term" value="F:heme binding"/>
    <property type="evidence" value="ECO:0000314"/>
    <property type="project" value="UniProtKB"/>
</dbReference>
<dbReference type="GO" id="GO:0046872">
    <property type="term" value="F:metal ion binding"/>
    <property type="evidence" value="ECO:0007669"/>
    <property type="project" value="UniProtKB-KW"/>
</dbReference>
<dbReference type="GO" id="GO:0016491">
    <property type="term" value="F:oxidoreductase activity"/>
    <property type="evidence" value="ECO:0000314"/>
    <property type="project" value="UniProtKB"/>
</dbReference>
<dbReference type="GO" id="GO:0016669">
    <property type="term" value="F:oxidoreductase activity, acting on a sulfur group of donors, cytochrome as acceptor"/>
    <property type="evidence" value="ECO:0000314"/>
    <property type="project" value="UniProtKB"/>
</dbReference>
<dbReference type="GO" id="GO:0046982">
    <property type="term" value="F:protein heterodimerization activity"/>
    <property type="evidence" value="ECO:0000353"/>
    <property type="project" value="UniProtKB"/>
</dbReference>
<dbReference type="GO" id="GO:0016783">
    <property type="term" value="F:sulfurtransferase activity"/>
    <property type="evidence" value="ECO:0000314"/>
    <property type="project" value="UniProtKB"/>
</dbReference>
<dbReference type="GO" id="GO:0004792">
    <property type="term" value="F:thiosulfate-cyanide sulfurtransferase activity"/>
    <property type="evidence" value="ECO:0000314"/>
    <property type="project" value="UniProtKB"/>
</dbReference>
<dbReference type="GO" id="GO:0019418">
    <property type="term" value="P:sulfide oxidation"/>
    <property type="evidence" value="ECO:0000315"/>
    <property type="project" value="UniProtKB"/>
</dbReference>
<dbReference type="GO" id="GO:0019417">
    <property type="term" value="P:sulfur oxidation"/>
    <property type="evidence" value="ECO:0000315"/>
    <property type="project" value="UniProtKB"/>
</dbReference>
<dbReference type="FunFam" id="1.10.760.10:FF:000030">
    <property type="entry name" value="L-cysteine S-thiosulfotransferase subunit SoxA"/>
    <property type="match status" value="1"/>
</dbReference>
<dbReference type="Gene3D" id="1.10.760.10">
    <property type="entry name" value="Cytochrome c-like domain"/>
    <property type="match status" value="2"/>
</dbReference>
<dbReference type="InterPro" id="IPR009056">
    <property type="entry name" value="Cyt_c-like_dom"/>
</dbReference>
<dbReference type="InterPro" id="IPR036909">
    <property type="entry name" value="Cyt_c-like_dom_sf"/>
</dbReference>
<dbReference type="InterPro" id="IPR025710">
    <property type="entry name" value="SoxA"/>
</dbReference>
<dbReference type="NCBIfam" id="TIGR04484">
    <property type="entry name" value="thiosulf_SoxA"/>
    <property type="match status" value="1"/>
</dbReference>
<dbReference type="Pfam" id="PF21342">
    <property type="entry name" value="SoxA-TsdA_cyt-c"/>
    <property type="match status" value="1"/>
</dbReference>
<dbReference type="PIRSF" id="PIRSF038455">
    <property type="entry name" value="SoxA"/>
    <property type="match status" value="1"/>
</dbReference>
<dbReference type="SUPFAM" id="SSF46626">
    <property type="entry name" value="Cytochrome c"/>
    <property type="match status" value="2"/>
</dbReference>
<dbReference type="PROSITE" id="PS51007">
    <property type="entry name" value="CYTC"/>
    <property type="match status" value="1"/>
</dbReference>